<gene>
    <name evidence="1" type="primary">infA</name>
    <name type="ordered locus">Tfu_2622</name>
</gene>
<organism>
    <name type="scientific">Thermobifida fusca (strain YX)</name>
    <dbReference type="NCBI Taxonomy" id="269800"/>
    <lineage>
        <taxon>Bacteria</taxon>
        <taxon>Bacillati</taxon>
        <taxon>Actinomycetota</taxon>
        <taxon>Actinomycetes</taxon>
        <taxon>Streptosporangiales</taxon>
        <taxon>Nocardiopsidaceae</taxon>
        <taxon>Thermobifida</taxon>
    </lineage>
</organism>
<comment type="function">
    <text evidence="1">One of the essential components for the initiation of protein synthesis. Stabilizes the binding of IF-2 and IF-3 on the 30S subunit to which N-formylmethionyl-tRNA(fMet) subsequently binds. Helps modulate mRNA selection, yielding the 30S pre-initiation complex (PIC). Upon addition of the 50S ribosomal subunit IF-1, IF-2 and IF-3 are released leaving the mature 70S translation initiation complex.</text>
</comment>
<comment type="subunit">
    <text evidence="1">Component of the 30S ribosomal translation pre-initiation complex which assembles on the 30S ribosome in the order IF-2 and IF-3, IF-1 and N-formylmethionyl-tRNA(fMet); mRNA recruitment can occur at any time during PIC assembly.</text>
</comment>
<comment type="subcellular location">
    <subcellularLocation>
        <location evidence="1">Cytoplasm</location>
    </subcellularLocation>
</comment>
<comment type="similarity">
    <text evidence="1">Belongs to the IF-1 family.</text>
</comment>
<keyword id="KW-0963">Cytoplasm</keyword>
<keyword id="KW-0396">Initiation factor</keyword>
<keyword id="KW-0648">Protein biosynthesis</keyword>
<keyword id="KW-0694">RNA-binding</keyword>
<keyword id="KW-0699">rRNA-binding</keyword>
<reference key="1">
    <citation type="journal article" date="2007" name="J. Bacteriol.">
        <title>Genome sequence and analysis of the soil cellulolytic actinomycete Thermobifida fusca YX.</title>
        <authorList>
            <person name="Lykidis A."/>
            <person name="Mavromatis K."/>
            <person name="Ivanova N."/>
            <person name="Anderson I."/>
            <person name="Land M."/>
            <person name="DiBartolo G."/>
            <person name="Martinez M."/>
            <person name="Lapidus A."/>
            <person name="Lucas S."/>
            <person name="Copeland A."/>
            <person name="Richardson P."/>
            <person name="Wilson D.B."/>
            <person name="Kyrpides N."/>
        </authorList>
    </citation>
    <scope>NUCLEOTIDE SEQUENCE [LARGE SCALE GENOMIC DNA]</scope>
    <source>
        <strain>YX</strain>
    </source>
</reference>
<accession>Q47LL7</accession>
<protein>
    <recommendedName>
        <fullName evidence="1">Translation initiation factor IF-1</fullName>
    </recommendedName>
</protein>
<evidence type="ECO:0000255" key="1">
    <source>
        <dbReference type="HAMAP-Rule" id="MF_00075"/>
    </source>
</evidence>
<name>IF1_THEFY</name>
<feature type="chain" id="PRO_0000263891" description="Translation initiation factor IF-1">
    <location>
        <begin position="1"/>
        <end position="73"/>
    </location>
</feature>
<feature type="domain" description="S1-like" evidence="1">
    <location>
        <begin position="1"/>
        <end position="73"/>
    </location>
</feature>
<sequence length="73" mass="8427">MAKKDGAIEIEGTVIESLPNAMFRVELDNGHKVLAHISGKMRMHYIRILPDDRVVVELSPYDLTRGRIVYRYK</sequence>
<dbReference type="EMBL" id="CP000088">
    <property type="protein sequence ID" value="AAZ56655.1"/>
    <property type="molecule type" value="Genomic_DNA"/>
</dbReference>
<dbReference type="RefSeq" id="WP_011293045.1">
    <property type="nucleotide sequence ID" value="NC_007333.1"/>
</dbReference>
<dbReference type="SMR" id="Q47LL7"/>
<dbReference type="STRING" id="269800.Tfu_2622"/>
<dbReference type="KEGG" id="tfu:Tfu_2622"/>
<dbReference type="eggNOG" id="COG0361">
    <property type="taxonomic scope" value="Bacteria"/>
</dbReference>
<dbReference type="HOGENOM" id="CLU_151267_1_0_11"/>
<dbReference type="GO" id="GO:0005829">
    <property type="term" value="C:cytosol"/>
    <property type="evidence" value="ECO:0007669"/>
    <property type="project" value="TreeGrafter"/>
</dbReference>
<dbReference type="GO" id="GO:0043022">
    <property type="term" value="F:ribosome binding"/>
    <property type="evidence" value="ECO:0007669"/>
    <property type="project" value="UniProtKB-UniRule"/>
</dbReference>
<dbReference type="GO" id="GO:0019843">
    <property type="term" value="F:rRNA binding"/>
    <property type="evidence" value="ECO:0007669"/>
    <property type="project" value="UniProtKB-UniRule"/>
</dbReference>
<dbReference type="GO" id="GO:0003743">
    <property type="term" value="F:translation initiation factor activity"/>
    <property type="evidence" value="ECO:0007669"/>
    <property type="project" value="UniProtKB-UniRule"/>
</dbReference>
<dbReference type="CDD" id="cd04451">
    <property type="entry name" value="S1_IF1"/>
    <property type="match status" value="1"/>
</dbReference>
<dbReference type="FunFam" id="2.40.50.140:FF:000002">
    <property type="entry name" value="Translation initiation factor IF-1"/>
    <property type="match status" value="1"/>
</dbReference>
<dbReference type="Gene3D" id="2.40.50.140">
    <property type="entry name" value="Nucleic acid-binding proteins"/>
    <property type="match status" value="1"/>
</dbReference>
<dbReference type="HAMAP" id="MF_00075">
    <property type="entry name" value="IF_1"/>
    <property type="match status" value="1"/>
</dbReference>
<dbReference type="InterPro" id="IPR012340">
    <property type="entry name" value="NA-bd_OB-fold"/>
</dbReference>
<dbReference type="InterPro" id="IPR006196">
    <property type="entry name" value="RNA-binding_domain_S1_IF1"/>
</dbReference>
<dbReference type="InterPro" id="IPR003029">
    <property type="entry name" value="S1_domain"/>
</dbReference>
<dbReference type="InterPro" id="IPR004368">
    <property type="entry name" value="TIF_IF1"/>
</dbReference>
<dbReference type="NCBIfam" id="TIGR00008">
    <property type="entry name" value="infA"/>
    <property type="match status" value="1"/>
</dbReference>
<dbReference type="PANTHER" id="PTHR33370">
    <property type="entry name" value="TRANSLATION INITIATION FACTOR IF-1, CHLOROPLASTIC"/>
    <property type="match status" value="1"/>
</dbReference>
<dbReference type="PANTHER" id="PTHR33370:SF1">
    <property type="entry name" value="TRANSLATION INITIATION FACTOR IF-1, CHLOROPLASTIC"/>
    <property type="match status" value="1"/>
</dbReference>
<dbReference type="Pfam" id="PF01176">
    <property type="entry name" value="eIF-1a"/>
    <property type="match status" value="1"/>
</dbReference>
<dbReference type="SMART" id="SM00316">
    <property type="entry name" value="S1"/>
    <property type="match status" value="1"/>
</dbReference>
<dbReference type="SUPFAM" id="SSF50249">
    <property type="entry name" value="Nucleic acid-binding proteins"/>
    <property type="match status" value="1"/>
</dbReference>
<dbReference type="PROSITE" id="PS50832">
    <property type="entry name" value="S1_IF1_TYPE"/>
    <property type="match status" value="1"/>
</dbReference>
<proteinExistence type="inferred from homology"/>